<feature type="chain" id="PRO_1000003297" description="Ribosome-recycling factor">
    <location>
        <begin position="1"/>
        <end position="182"/>
    </location>
</feature>
<dbReference type="EMBL" id="CT971583">
    <property type="protein sequence ID" value="CAK23064.1"/>
    <property type="molecule type" value="Genomic_DNA"/>
</dbReference>
<dbReference type="SMR" id="A5GJE9"/>
<dbReference type="STRING" id="32051.SynWH7803_0638"/>
<dbReference type="KEGG" id="syx:SynWH7803_0638"/>
<dbReference type="eggNOG" id="COG0233">
    <property type="taxonomic scope" value="Bacteria"/>
</dbReference>
<dbReference type="HOGENOM" id="CLU_073981_2_0_3"/>
<dbReference type="OrthoDB" id="9804006at2"/>
<dbReference type="Proteomes" id="UP000001566">
    <property type="component" value="Chromosome"/>
</dbReference>
<dbReference type="GO" id="GO:0005737">
    <property type="term" value="C:cytoplasm"/>
    <property type="evidence" value="ECO:0007669"/>
    <property type="project" value="UniProtKB-SubCell"/>
</dbReference>
<dbReference type="GO" id="GO:0043023">
    <property type="term" value="F:ribosomal large subunit binding"/>
    <property type="evidence" value="ECO:0007669"/>
    <property type="project" value="TreeGrafter"/>
</dbReference>
<dbReference type="GO" id="GO:0006415">
    <property type="term" value="P:translational termination"/>
    <property type="evidence" value="ECO:0007669"/>
    <property type="project" value="UniProtKB-UniRule"/>
</dbReference>
<dbReference type="CDD" id="cd00520">
    <property type="entry name" value="RRF"/>
    <property type="match status" value="1"/>
</dbReference>
<dbReference type="FunFam" id="1.10.132.20:FF:000001">
    <property type="entry name" value="Ribosome-recycling factor"/>
    <property type="match status" value="1"/>
</dbReference>
<dbReference type="FunFam" id="3.30.1360.40:FF:000001">
    <property type="entry name" value="Ribosome-recycling factor"/>
    <property type="match status" value="1"/>
</dbReference>
<dbReference type="Gene3D" id="3.30.1360.40">
    <property type="match status" value="1"/>
</dbReference>
<dbReference type="Gene3D" id="1.10.132.20">
    <property type="entry name" value="Ribosome-recycling factor"/>
    <property type="match status" value="1"/>
</dbReference>
<dbReference type="HAMAP" id="MF_00040">
    <property type="entry name" value="RRF"/>
    <property type="match status" value="1"/>
</dbReference>
<dbReference type="InterPro" id="IPR002661">
    <property type="entry name" value="Ribosome_recyc_fac"/>
</dbReference>
<dbReference type="InterPro" id="IPR023584">
    <property type="entry name" value="Ribosome_recyc_fac_dom"/>
</dbReference>
<dbReference type="InterPro" id="IPR036191">
    <property type="entry name" value="RRF_sf"/>
</dbReference>
<dbReference type="NCBIfam" id="TIGR00496">
    <property type="entry name" value="frr"/>
    <property type="match status" value="1"/>
</dbReference>
<dbReference type="PANTHER" id="PTHR20982:SF3">
    <property type="entry name" value="MITOCHONDRIAL RIBOSOME RECYCLING FACTOR PSEUDO 1"/>
    <property type="match status" value="1"/>
</dbReference>
<dbReference type="PANTHER" id="PTHR20982">
    <property type="entry name" value="RIBOSOME RECYCLING FACTOR"/>
    <property type="match status" value="1"/>
</dbReference>
<dbReference type="Pfam" id="PF01765">
    <property type="entry name" value="RRF"/>
    <property type="match status" value="1"/>
</dbReference>
<dbReference type="SUPFAM" id="SSF55194">
    <property type="entry name" value="Ribosome recycling factor, RRF"/>
    <property type="match status" value="1"/>
</dbReference>
<reference key="1">
    <citation type="submission" date="2006-05" db="EMBL/GenBank/DDBJ databases">
        <authorList>
            <consortium name="Genoscope"/>
        </authorList>
    </citation>
    <scope>NUCLEOTIDE SEQUENCE [LARGE SCALE GENOMIC DNA]</scope>
    <source>
        <strain>WH7803</strain>
    </source>
</reference>
<sequence length="182" mass="20464">MSQSDLESSMRKSVEATQRNFNTIRTGRANSSLLDRISVEYYGAETPLKSLATLSTPDSQTIQIQPFDISALALIEKAIAMSELGFTPNNDGKVIRINVPPLTEERRKEFCKLASKYAEEGKVALRNLRRDAIDKIKKQEKEGEFSEDQSRDAQDSVQKTLDKFIAEVEQHLATKEADILKV</sequence>
<organism>
    <name type="scientific">Synechococcus sp. (strain WH7803)</name>
    <dbReference type="NCBI Taxonomy" id="32051"/>
    <lineage>
        <taxon>Bacteria</taxon>
        <taxon>Bacillati</taxon>
        <taxon>Cyanobacteriota</taxon>
        <taxon>Cyanophyceae</taxon>
        <taxon>Synechococcales</taxon>
        <taxon>Synechococcaceae</taxon>
        <taxon>Synechococcus</taxon>
    </lineage>
</organism>
<proteinExistence type="inferred from homology"/>
<protein>
    <recommendedName>
        <fullName evidence="1">Ribosome-recycling factor</fullName>
        <shortName evidence="1">RRF</shortName>
    </recommendedName>
    <alternativeName>
        <fullName evidence="1">Ribosome-releasing factor</fullName>
    </alternativeName>
</protein>
<comment type="function">
    <text evidence="1">Responsible for the release of ribosomes from messenger RNA at the termination of protein biosynthesis. May increase the efficiency of translation by recycling ribosomes from one round of translation to another.</text>
</comment>
<comment type="subcellular location">
    <subcellularLocation>
        <location evidence="1">Cytoplasm</location>
    </subcellularLocation>
</comment>
<comment type="similarity">
    <text evidence="1">Belongs to the RRF family.</text>
</comment>
<name>RRF_SYNPW</name>
<accession>A5GJE9</accession>
<keyword id="KW-0963">Cytoplasm</keyword>
<keyword id="KW-0648">Protein biosynthesis</keyword>
<keyword id="KW-1185">Reference proteome</keyword>
<evidence type="ECO:0000255" key="1">
    <source>
        <dbReference type="HAMAP-Rule" id="MF_00040"/>
    </source>
</evidence>
<gene>
    <name evidence="1" type="primary">frr</name>
    <name type="ordered locus">SynWH7803_0638</name>
</gene>